<sequence length="295" mass="32298">MLYQQIAKNKRKTVLVMAGFVFLAGLIGAAIGYAFMGSAQTGIIIAVVVGIVYMFVILGQSTDVVMSMNNAQEITEQQAPELWHIVEDMAMVGKVPMPRVFIIDDPSPNAFATGPDPEHAAVAATTGILQRLNREELEGVMAHEVSHIRNYDIRLQTYALALASVISFLANMGMNAMWWGGGRRDDRDNGNAGQVIMLLLSVLAIILGPLAASMAQMALSRNREYLADASAVELTRNPQGLINALRKISMSEPMQNADPSSASMYIANPFKDGSWTHLFDTHPPIEKRIDRLEHM</sequence>
<protein>
    <recommendedName>
        <fullName evidence="1">Protease HtpX homolog</fullName>
        <ecNumber evidence="1">3.4.24.-</ecNumber>
    </recommendedName>
</protein>
<dbReference type="EC" id="3.4.24.-" evidence="1"/>
<dbReference type="EMBL" id="CP000233">
    <property type="protein sequence ID" value="ABD99030.1"/>
    <property type="molecule type" value="Genomic_DNA"/>
</dbReference>
<dbReference type="RefSeq" id="WP_003699683.1">
    <property type="nucleotide sequence ID" value="NC_007929.1"/>
</dbReference>
<dbReference type="RefSeq" id="YP_535113.1">
    <property type="nucleotide sequence ID" value="NC_007929.1"/>
</dbReference>
<dbReference type="STRING" id="362948.LSL_0215"/>
<dbReference type="GeneID" id="89464963"/>
<dbReference type="KEGG" id="lsl:LSL_0215"/>
<dbReference type="PATRIC" id="fig|362948.14.peg.299"/>
<dbReference type="HOGENOM" id="CLU_042266_2_1_9"/>
<dbReference type="OrthoDB" id="15218at2"/>
<dbReference type="Proteomes" id="UP000006559">
    <property type="component" value="Chromosome"/>
</dbReference>
<dbReference type="GO" id="GO:0005886">
    <property type="term" value="C:plasma membrane"/>
    <property type="evidence" value="ECO:0007669"/>
    <property type="project" value="UniProtKB-SubCell"/>
</dbReference>
<dbReference type="GO" id="GO:0004222">
    <property type="term" value="F:metalloendopeptidase activity"/>
    <property type="evidence" value="ECO:0007669"/>
    <property type="project" value="UniProtKB-UniRule"/>
</dbReference>
<dbReference type="GO" id="GO:0008270">
    <property type="term" value="F:zinc ion binding"/>
    <property type="evidence" value="ECO:0007669"/>
    <property type="project" value="UniProtKB-UniRule"/>
</dbReference>
<dbReference type="GO" id="GO:0006508">
    <property type="term" value="P:proteolysis"/>
    <property type="evidence" value="ECO:0007669"/>
    <property type="project" value="UniProtKB-KW"/>
</dbReference>
<dbReference type="CDD" id="cd07340">
    <property type="entry name" value="M48B_Htpx_like"/>
    <property type="match status" value="1"/>
</dbReference>
<dbReference type="Gene3D" id="3.30.2010.10">
    <property type="entry name" value="Metalloproteases ('zincins'), catalytic domain"/>
    <property type="match status" value="1"/>
</dbReference>
<dbReference type="HAMAP" id="MF_00188">
    <property type="entry name" value="Pept_M48_protease_HtpX"/>
    <property type="match status" value="1"/>
</dbReference>
<dbReference type="InterPro" id="IPR050083">
    <property type="entry name" value="HtpX_protease"/>
</dbReference>
<dbReference type="InterPro" id="IPR022919">
    <property type="entry name" value="Pept_M48_protease_HtpX"/>
</dbReference>
<dbReference type="InterPro" id="IPR001915">
    <property type="entry name" value="Peptidase_M48"/>
</dbReference>
<dbReference type="NCBIfam" id="NF003425">
    <property type="entry name" value="PRK04897.1"/>
    <property type="match status" value="1"/>
</dbReference>
<dbReference type="PANTHER" id="PTHR43221">
    <property type="entry name" value="PROTEASE HTPX"/>
    <property type="match status" value="1"/>
</dbReference>
<dbReference type="PANTHER" id="PTHR43221:SF1">
    <property type="entry name" value="PROTEASE HTPX"/>
    <property type="match status" value="1"/>
</dbReference>
<dbReference type="Pfam" id="PF01435">
    <property type="entry name" value="Peptidase_M48"/>
    <property type="match status" value="1"/>
</dbReference>
<keyword id="KW-1003">Cell membrane</keyword>
<keyword id="KW-0378">Hydrolase</keyword>
<keyword id="KW-0472">Membrane</keyword>
<keyword id="KW-0479">Metal-binding</keyword>
<keyword id="KW-0482">Metalloprotease</keyword>
<keyword id="KW-0645">Protease</keyword>
<keyword id="KW-1185">Reference proteome</keyword>
<keyword id="KW-0812">Transmembrane</keyword>
<keyword id="KW-1133">Transmembrane helix</keyword>
<keyword id="KW-0862">Zinc</keyword>
<name>HTPX_LIGS1</name>
<accession>Q1WV87</accession>
<proteinExistence type="inferred from homology"/>
<organism>
    <name type="scientific">Ligilactobacillus salivarius (strain UCC118)</name>
    <name type="common">Lactobacillus salivarius</name>
    <dbReference type="NCBI Taxonomy" id="362948"/>
    <lineage>
        <taxon>Bacteria</taxon>
        <taxon>Bacillati</taxon>
        <taxon>Bacillota</taxon>
        <taxon>Bacilli</taxon>
        <taxon>Lactobacillales</taxon>
        <taxon>Lactobacillaceae</taxon>
        <taxon>Ligilactobacillus</taxon>
    </lineage>
</organism>
<gene>
    <name evidence="1" type="primary">htpX</name>
    <name type="ordered locus">LSL_0215</name>
</gene>
<reference key="1">
    <citation type="journal article" date="2006" name="Proc. Natl. Acad. Sci. U.S.A.">
        <title>Multireplicon genome architecture of Lactobacillus salivarius.</title>
        <authorList>
            <person name="Claesson M.J."/>
            <person name="Li Y."/>
            <person name="Leahy S."/>
            <person name="Canchaya C."/>
            <person name="van Pijkeren J.P."/>
            <person name="Cerdeno-Tarraga A.M."/>
            <person name="Parkhill J."/>
            <person name="Flynn S."/>
            <person name="O'Sullivan G.C."/>
            <person name="Collins J.K."/>
            <person name="Higgins D."/>
            <person name="Shanahan F."/>
            <person name="Fitzgerald G.F."/>
            <person name="van Sinderen D."/>
            <person name="O'Toole P.W."/>
        </authorList>
    </citation>
    <scope>NUCLEOTIDE SEQUENCE [LARGE SCALE GENOMIC DNA]</scope>
    <source>
        <strain>UCC118</strain>
    </source>
</reference>
<feature type="chain" id="PRO_1000020879" description="Protease HtpX homolog">
    <location>
        <begin position="1"/>
        <end position="295"/>
    </location>
</feature>
<feature type="transmembrane region" description="Helical" evidence="1">
    <location>
        <begin position="15"/>
        <end position="35"/>
    </location>
</feature>
<feature type="transmembrane region" description="Helical" evidence="1">
    <location>
        <begin position="39"/>
        <end position="59"/>
    </location>
</feature>
<feature type="transmembrane region" description="Helical" evidence="1">
    <location>
        <begin position="159"/>
        <end position="179"/>
    </location>
</feature>
<feature type="transmembrane region" description="Helical" evidence="1">
    <location>
        <begin position="195"/>
        <end position="215"/>
    </location>
</feature>
<feature type="active site" evidence="1">
    <location>
        <position position="144"/>
    </location>
</feature>
<feature type="binding site" evidence="1">
    <location>
        <position position="143"/>
    </location>
    <ligand>
        <name>Zn(2+)</name>
        <dbReference type="ChEBI" id="CHEBI:29105"/>
        <note>catalytic</note>
    </ligand>
</feature>
<feature type="binding site" evidence="1">
    <location>
        <position position="147"/>
    </location>
    <ligand>
        <name>Zn(2+)</name>
        <dbReference type="ChEBI" id="CHEBI:29105"/>
        <note>catalytic</note>
    </ligand>
</feature>
<feature type="binding site" evidence="1">
    <location>
        <position position="224"/>
    </location>
    <ligand>
        <name>Zn(2+)</name>
        <dbReference type="ChEBI" id="CHEBI:29105"/>
        <note>catalytic</note>
    </ligand>
</feature>
<comment type="cofactor">
    <cofactor evidence="1">
        <name>Zn(2+)</name>
        <dbReference type="ChEBI" id="CHEBI:29105"/>
    </cofactor>
    <text evidence="1">Binds 1 zinc ion per subunit.</text>
</comment>
<comment type="subcellular location">
    <subcellularLocation>
        <location evidence="1">Cell membrane</location>
        <topology evidence="1">Multi-pass membrane protein</topology>
    </subcellularLocation>
</comment>
<comment type="similarity">
    <text evidence="1">Belongs to the peptidase M48B family.</text>
</comment>
<evidence type="ECO:0000255" key="1">
    <source>
        <dbReference type="HAMAP-Rule" id="MF_00188"/>
    </source>
</evidence>